<name>CNRC_CUPMC</name>
<sequence>MKQVISSFLCRPRFVGSAIWLLPVALSHAAEAPPFPNLLQQSLALAPAMVAQAANVRAAGADAAQAQAWLNPRIDTVLENLGAPSSDGLSQRQNTYSITQPFELGGKRGARIEVGERNFAAAQARERQAQVAYAAELAVAYATAEAALGRKILATENLARANEELAAARALVDSGKEASLRSAQAKASVAAAQAAEAAATNDATQALARLSAMSGASEPYTAVTSSLLTTQAVVPNAPAALAESPSVRAAEAERNALDAQVDVERKRWIPDVGVSAGVRRYGWTNSSGYVVGVTASIPLFDQNRNGINAAVERVAAAQARLDSVRLEANVARQSAISQVATADKQLAAASEGEQAAAEAYRMGRIGYESGKTPLMELLAVRRALVDARQLTIDARLARVRALAALAQADGRLAFEESR</sequence>
<evidence type="ECO:0000255" key="1"/>
<evidence type="ECO:0000269" key="2">
    <source>
    </source>
</evidence>
<evidence type="ECO:0000305" key="3"/>
<feature type="signal peptide" evidence="1">
    <location>
        <begin position="1"/>
        <end position="29"/>
    </location>
</feature>
<feature type="chain" id="PRO_0000020952" description="Nickel and cobalt resistance protein CnrC">
    <location>
        <begin position="30"/>
        <end position="418"/>
    </location>
</feature>
<comment type="function">
    <text>The products of the genes cnrA, cnrB, and cnrC are likely to form a membrane-bound protein complex catalyzing an energy-dependent efflux of Ni(2+) and Co(2+). The mechanism of action of the CnrCBA complex may be that of a proton/cation antiporter.</text>
</comment>
<comment type="induction">
    <text evidence="2">By nickel.</text>
</comment>
<comment type="similarity">
    <text evidence="3">Belongs to the outer membrane factor (OMF) (TC 1.B.17) family.</text>
</comment>
<reference key="1">
    <citation type="journal article" date="1993" name="J. Bacteriol.">
        <title>Characterization of the inducible nickel and cobalt resistance determinant cnr from pMOL28 of Alcaligenes eutrophus CH34.</title>
        <authorList>
            <person name="Liesegang H."/>
            <person name="Lemke K."/>
            <person name="Siddiqui R.A."/>
            <person name="Schlegel H.-G."/>
        </authorList>
    </citation>
    <scope>NUCLEOTIDE SEQUENCE [GENOMIC DNA]</scope>
</reference>
<reference key="2">
    <citation type="submission" date="2004-10" db="EMBL/GenBank/DDBJ databases">
        <title>Sequence and features of the Ralstonia metallidurans CH34 heavy metal plasmids pMOL28 and pMOL30.</title>
        <authorList>
            <person name="van der Lelie D."/>
            <person name="Monchy S."/>
            <person name="Taghavi S."/>
            <person name="McCorkle S."/>
            <person name="Dunn J."/>
            <person name="Benotmane M."/>
            <person name="Vallaeys T."/>
            <person name="Lapidus A."/>
            <person name="Mergeay M."/>
        </authorList>
    </citation>
    <scope>NUCLEOTIDE SEQUENCE [LARGE SCALE GENOMIC DNA]</scope>
</reference>
<reference key="3">
    <citation type="journal article" date="2010" name="PLoS ONE">
        <title>The complete genome sequence of Cupriavidus metallidurans strain CH34, a master survivalist in harsh and anthropogenic environments.</title>
        <authorList>
            <person name="Janssen P.J."/>
            <person name="Van Houdt R."/>
            <person name="Moors H."/>
            <person name="Monsieurs P."/>
            <person name="Morin N."/>
            <person name="Michaux A."/>
            <person name="Benotmane M.A."/>
            <person name="Leys N."/>
            <person name="Vallaeys T."/>
            <person name="Lapidus A."/>
            <person name="Monchy S."/>
            <person name="Medigue C."/>
            <person name="Taghavi S."/>
            <person name="McCorkle S."/>
            <person name="Dunn J."/>
            <person name="van der Lelie D."/>
            <person name="Mergeay M."/>
        </authorList>
    </citation>
    <scope>NUCLEOTIDE SEQUENCE [LARGE SCALE GENOMIC DNA]</scope>
    <source>
        <strain>ATCC 43123 / DSM 2839 / NBRC 102507 / CH34</strain>
    </source>
</reference>
<reference key="4">
    <citation type="journal article" date="2000" name="J. Bacteriol.">
        <title>Regulation of the cnr cobalt and nickel resistance determinant from Ralstonia sp. strain CH34.</title>
        <authorList>
            <person name="Grass G."/>
            <person name="Grosse C."/>
            <person name="Nies D.H."/>
        </authorList>
    </citation>
    <scope>INDUCTION</scope>
</reference>
<protein>
    <recommendedName>
        <fullName>Nickel and cobalt resistance protein CnrC</fullName>
    </recommendedName>
</protein>
<dbReference type="EMBL" id="M91650">
    <property type="protein sequence ID" value="AAA21968.1"/>
    <property type="molecule type" value="Genomic_DNA"/>
</dbReference>
<dbReference type="EMBL" id="AJ276513">
    <property type="protein sequence ID" value="CAB82451.1"/>
    <property type="molecule type" value="Genomic_DNA"/>
</dbReference>
<dbReference type="EMBL" id="X90708">
    <property type="protein sequence ID" value="CAI30229.1"/>
    <property type="molecule type" value="Genomic_DNA"/>
</dbReference>
<dbReference type="EMBL" id="CP000355">
    <property type="protein sequence ID" value="ABF13067.1"/>
    <property type="molecule type" value="Genomic_DNA"/>
</dbReference>
<dbReference type="PIR" id="E47056">
    <property type="entry name" value="E47056"/>
</dbReference>
<dbReference type="RefSeq" id="WP_011239968.1">
    <property type="nucleotide sequence ID" value="NC_007972.2"/>
</dbReference>
<dbReference type="RefSeq" id="YP_161707.1">
    <property type="nucleotide sequence ID" value="NC_006525.1"/>
</dbReference>
<dbReference type="SMR" id="P37974"/>
<dbReference type="TCDB" id="1.B.17.2.1">
    <property type="family name" value="the outer membrane factor (omf) family"/>
</dbReference>
<dbReference type="GeneID" id="60825774"/>
<dbReference type="KEGG" id="rme:Rmet_6208"/>
<dbReference type="HOGENOM" id="CLU_012817_14_2_4"/>
<dbReference type="Proteomes" id="UP000002429">
    <property type="component" value="Plasmid pMOL28"/>
</dbReference>
<dbReference type="GO" id="GO:0015562">
    <property type="term" value="F:efflux transmembrane transporter activity"/>
    <property type="evidence" value="ECO:0007669"/>
    <property type="project" value="InterPro"/>
</dbReference>
<dbReference type="Gene3D" id="1.20.1600.10">
    <property type="entry name" value="Outer membrane efflux proteins (OEP)"/>
    <property type="match status" value="1"/>
</dbReference>
<dbReference type="InterPro" id="IPR050737">
    <property type="entry name" value="OMF"/>
</dbReference>
<dbReference type="InterPro" id="IPR003423">
    <property type="entry name" value="OMP_efflux"/>
</dbReference>
<dbReference type="PANTHER" id="PTHR30203:SF24">
    <property type="entry name" value="BLR4935 PROTEIN"/>
    <property type="match status" value="1"/>
</dbReference>
<dbReference type="PANTHER" id="PTHR30203">
    <property type="entry name" value="OUTER MEMBRANE CATION EFFLUX PROTEIN"/>
    <property type="match status" value="1"/>
</dbReference>
<dbReference type="Pfam" id="PF02321">
    <property type="entry name" value="OEP"/>
    <property type="match status" value="2"/>
</dbReference>
<dbReference type="SUPFAM" id="SSF56954">
    <property type="entry name" value="Outer membrane efflux proteins (OEP)"/>
    <property type="match status" value="1"/>
</dbReference>
<gene>
    <name type="primary">cnrC</name>
    <name type="ordered locus">Rmet_6208</name>
    <name type="ORF">RMe0085</name>
</gene>
<accession>P37974</accession>
<accession>Q5NUX3</accession>
<accession>Q7B056</accession>
<proteinExistence type="evidence at transcript level"/>
<keyword id="KW-0170">Cobalt</keyword>
<keyword id="KW-0533">Nickel</keyword>
<keyword id="KW-0614">Plasmid</keyword>
<keyword id="KW-1185">Reference proteome</keyword>
<keyword id="KW-0732">Signal</keyword>
<keyword id="KW-0813">Transport</keyword>
<organism>
    <name type="scientific">Cupriavidus metallidurans (strain ATCC 43123 / DSM 2839 / NBRC 102507 / CH34)</name>
    <name type="common">Ralstonia metallidurans</name>
    <dbReference type="NCBI Taxonomy" id="266264"/>
    <lineage>
        <taxon>Bacteria</taxon>
        <taxon>Pseudomonadati</taxon>
        <taxon>Pseudomonadota</taxon>
        <taxon>Betaproteobacteria</taxon>
        <taxon>Burkholderiales</taxon>
        <taxon>Burkholderiaceae</taxon>
        <taxon>Cupriavidus</taxon>
    </lineage>
</organism>
<geneLocation type="plasmid">
    <name>pMOL28</name>
</geneLocation>